<feature type="initiator methionine" description="Removed" evidence="1">
    <location>
        <position position="1"/>
    </location>
</feature>
<feature type="chain" id="PRO_0000111887" description="Protein-L-isoaspartate O-methyltransferase">
    <location>
        <begin position="2"/>
        <end position="208"/>
    </location>
</feature>
<feature type="active site" evidence="1">
    <location>
        <position position="59"/>
    </location>
</feature>
<evidence type="ECO:0000250" key="1"/>
<evidence type="ECO:0000305" key="2"/>
<comment type="function">
    <text evidence="1">Catalyzes the methyl esterification of L-isoaspartyl residues in peptides and proteins that result from spontaneous decomposition of normal L-aspartyl and L-asparaginyl residues. It plays a role in the repair and/or degradation of damaged proteins (By similarity).</text>
</comment>
<comment type="catalytic activity">
    <reaction>
        <text>[protein]-L-isoaspartate + S-adenosyl-L-methionine = [protein]-L-isoaspartate alpha-methyl ester + S-adenosyl-L-homocysteine</text>
        <dbReference type="Rhea" id="RHEA:12705"/>
        <dbReference type="Rhea" id="RHEA-COMP:12143"/>
        <dbReference type="Rhea" id="RHEA-COMP:12144"/>
        <dbReference type="ChEBI" id="CHEBI:57856"/>
        <dbReference type="ChEBI" id="CHEBI:59789"/>
        <dbReference type="ChEBI" id="CHEBI:90596"/>
        <dbReference type="ChEBI" id="CHEBI:90598"/>
        <dbReference type="EC" id="2.1.1.77"/>
    </reaction>
</comment>
<comment type="subunit">
    <text evidence="1">Monomer.</text>
</comment>
<comment type="subcellular location">
    <subcellularLocation>
        <location evidence="1">Cytoplasm</location>
    </subcellularLocation>
</comment>
<comment type="similarity">
    <text evidence="2">Belongs to the methyltransferase superfamily. L-isoaspartyl/D-aspartyl protein methyltransferase family.</text>
</comment>
<protein>
    <recommendedName>
        <fullName>Protein-L-isoaspartate O-methyltransferase</fullName>
        <ecNumber>2.1.1.77</ecNumber>
    </recommendedName>
    <alternativeName>
        <fullName>L-isoaspartyl protein carboxyl methyltransferase</fullName>
    </alternativeName>
    <alternativeName>
        <fullName>Protein L-isoaspartyl methyltransferase</fullName>
    </alternativeName>
    <alternativeName>
        <fullName>Protein-beta-aspartate methyltransferase</fullName>
        <shortName>PIMT</shortName>
    </alternativeName>
</protein>
<dbReference type="EC" id="2.1.1.77"/>
<dbReference type="EMBL" id="AE005174">
    <property type="protein sequence ID" value="AAG57850.1"/>
    <property type="molecule type" value="Genomic_DNA"/>
</dbReference>
<dbReference type="EMBL" id="BA000007">
    <property type="protein sequence ID" value="BAB37020.1"/>
    <property type="molecule type" value="Genomic_DNA"/>
</dbReference>
<dbReference type="PIR" id="E91078">
    <property type="entry name" value="E91078"/>
</dbReference>
<dbReference type="PIR" id="F85923">
    <property type="entry name" value="F85923"/>
</dbReference>
<dbReference type="RefSeq" id="NP_311624.1">
    <property type="nucleotide sequence ID" value="NC_002695.1"/>
</dbReference>
<dbReference type="RefSeq" id="WP_000254708.1">
    <property type="nucleotide sequence ID" value="NZ_VOAI01000003.1"/>
</dbReference>
<dbReference type="SMR" id="P0A7A6"/>
<dbReference type="STRING" id="155864.Z4051"/>
<dbReference type="GeneID" id="914681"/>
<dbReference type="GeneID" id="93779263"/>
<dbReference type="KEGG" id="ece:Z4051"/>
<dbReference type="KEGG" id="ecs:ECs_3597"/>
<dbReference type="PATRIC" id="fig|386585.9.peg.3760"/>
<dbReference type="eggNOG" id="COG2518">
    <property type="taxonomic scope" value="Bacteria"/>
</dbReference>
<dbReference type="HOGENOM" id="CLU_055432_2_0_6"/>
<dbReference type="OMA" id="HMHASAC"/>
<dbReference type="Proteomes" id="UP000000558">
    <property type="component" value="Chromosome"/>
</dbReference>
<dbReference type="Proteomes" id="UP000002519">
    <property type="component" value="Chromosome"/>
</dbReference>
<dbReference type="GO" id="GO:0005737">
    <property type="term" value="C:cytoplasm"/>
    <property type="evidence" value="ECO:0007669"/>
    <property type="project" value="UniProtKB-SubCell"/>
</dbReference>
<dbReference type="GO" id="GO:0004719">
    <property type="term" value="F:protein-L-isoaspartate (D-aspartate) O-methyltransferase activity"/>
    <property type="evidence" value="ECO:0007669"/>
    <property type="project" value="UniProtKB-UniRule"/>
</dbReference>
<dbReference type="GO" id="GO:0032259">
    <property type="term" value="P:methylation"/>
    <property type="evidence" value="ECO:0007669"/>
    <property type="project" value="UniProtKB-KW"/>
</dbReference>
<dbReference type="GO" id="GO:0036211">
    <property type="term" value="P:protein modification process"/>
    <property type="evidence" value="ECO:0007669"/>
    <property type="project" value="UniProtKB-UniRule"/>
</dbReference>
<dbReference type="GO" id="GO:0030091">
    <property type="term" value="P:protein repair"/>
    <property type="evidence" value="ECO:0007669"/>
    <property type="project" value="UniProtKB-UniRule"/>
</dbReference>
<dbReference type="CDD" id="cd02440">
    <property type="entry name" value="AdoMet_MTases"/>
    <property type="match status" value="1"/>
</dbReference>
<dbReference type="FunFam" id="3.40.50.150:FF:000010">
    <property type="entry name" value="Protein-L-isoaspartate O-methyltransferase"/>
    <property type="match status" value="1"/>
</dbReference>
<dbReference type="Gene3D" id="3.40.50.150">
    <property type="entry name" value="Vaccinia Virus protein VP39"/>
    <property type="match status" value="1"/>
</dbReference>
<dbReference type="HAMAP" id="MF_00090">
    <property type="entry name" value="PIMT"/>
    <property type="match status" value="1"/>
</dbReference>
<dbReference type="InterPro" id="IPR000682">
    <property type="entry name" value="PCMT"/>
</dbReference>
<dbReference type="InterPro" id="IPR029063">
    <property type="entry name" value="SAM-dependent_MTases_sf"/>
</dbReference>
<dbReference type="NCBIfam" id="TIGR00080">
    <property type="entry name" value="pimt"/>
    <property type="match status" value="1"/>
</dbReference>
<dbReference type="NCBIfam" id="NF001453">
    <property type="entry name" value="PRK00312.1"/>
    <property type="match status" value="1"/>
</dbReference>
<dbReference type="PANTHER" id="PTHR11579">
    <property type="entry name" value="PROTEIN-L-ISOASPARTATE O-METHYLTRANSFERASE"/>
    <property type="match status" value="1"/>
</dbReference>
<dbReference type="PANTHER" id="PTHR11579:SF0">
    <property type="entry name" value="PROTEIN-L-ISOASPARTATE(D-ASPARTATE) O-METHYLTRANSFERASE"/>
    <property type="match status" value="1"/>
</dbReference>
<dbReference type="Pfam" id="PF01135">
    <property type="entry name" value="PCMT"/>
    <property type="match status" value="1"/>
</dbReference>
<dbReference type="SUPFAM" id="SSF53335">
    <property type="entry name" value="S-adenosyl-L-methionine-dependent methyltransferases"/>
    <property type="match status" value="1"/>
</dbReference>
<dbReference type="PROSITE" id="PS01279">
    <property type="entry name" value="PCMT"/>
    <property type="match status" value="1"/>
</dbReference>
<gene>
    <name type="primary">pcm</name>
    <name type="ordered locus">Z4051</name>
    <name type="ordered locus">ECs3597</name>
</gene>
<accession>P0A7A6</accession>
<accession>P24206</accession>
<proteinExistence type="inferred from homology"/>
<sequence length="208" mass="23258">MVSRRVQALLDQLRAQGIQDEQVLNALAAVPREKFVDEAFEQKAWDNIALPIGQGQTISQPYMVARMTELLELTPQSRVLEIGTGSGYQTAILAHLVQHVCSVERIKGLQWQARRRLKNLDLHNVSTRHGDGWQGWQARAPFDAIIVTAAPPEIPTALMTQLDEGGILVLPVGEEHQYLKRVRRRGGEFIIDTVEAVRFVPLVKGELA</sequence>
<organism>
    <name type="scientific">Escherichia coli O157:H7</name>
    <dbReference type="NCBI Taxonomy" id="83334"/>
    <lineage>
        <taxon>Bacteria</taxon>
        <taxon>Pseudomonadati</taxon>
        <taxon>Pseudomonadota</taxon>
        <taxon>Gammaproteobacteria</taxon>
        <taxon>Enterobacterales</taxon>
        <taxon>Enterobacteriaceae</taxon>
        <taxon>Escherichia</taxon>
    </lineage>
</organism>
<name>PIMT_ECO57</name>
<keyword id="KW-0963">Cytoplasm</keyword>
<keyword id="KW-0489">Methyltransferase</keyword>
<keyword id="KW-1185">Reference proteome</keyword>
<keyword id="KW-0949">S-adenosyl-L-methionine</keyword>
<keyword id="KW-0808">Transferase</keyword>
<reference key="1">
    <citation type="journal article" date="2001" name="Nature">
        <title>Genome sequence of enterohaemorrhagic Escherichia coli O157:H7.</title>
        <authorList>
            <person name="Perna N.T."/>
            <person name="Plunkett G. III"/>
            <person name="Burland V."/>
            <person name="Mau B."/>
            <person name="Glasner J.D."/>
            <person name="Rose D.J."/>
            <person name="Mayhew G.F."/>
            <person name="Evans P.S."/>
            <person name="Gregor J."/>
            <person name="Kirkpatrick H.A."/>
            <person name="Posfai G."/>
            <person name="Hackett J."/>
            <person name="Klink S."/>
            <person name="Boutin A."/>
            <person name="Shao Y."/>
            <person name="Miller L."/>
            <person name="Grotbeck E.J."/>
            <person name="Davis N.W."/>
            <person name="Lim A."/>
            <person name="Dimalanta E.T."/>
            <person name="Potamousis K."/>
            <person name="Apodaca J."/>
            <person name="Anantharaman T.S."/>
            <person name="Lin J."/>
            <person name="Yen G."/>
            <person name="Schwartz D.C."/>
            <person name="Welch R.A."/>
            <person name="Blattner F.R."/>
        </authorList>
    </citation>
    <scope>NUCLEOTIDE SEQUENCE [LARGE SCALE GENOMIC DNA]</scope>
    <source>
        <strain>O157:H7 / EDL933 / ATCC 700927 / EHEC</strain>
    </source>
</reference>
<reference key="2">
    <citation type="journal article" date="2001" name="DNA Res.">
        <title>Complete genome sequence of enterohemorrhagic Escherichia coli O157:H7 and genomic comparison with a laboratory strain K-12.</title>
        <authorList>
            <person name="Hayashi T."/>
            <person name="Makino K."/>
            <person name="Ohnishi M."/>
            <person name="Kurokawa K."/>
            <person name="Ishii K."/>
            <person name="Yokoyama K."/>
            <person name="Han C.-G."/>
            <person name="Ohtsubo E."/>
            <person name="Nakayama K."/>
            <person name="Murata T."/>
            <person name="Tanaka M."/>
            <person name="Tobe T."/>
            <person name="Iida T."/>
            <person name="Takami H."/>
            <person name="Honda T."/>
            <person name="Sasakawa C."/>
            <person name="Ogasawara N."/>
            <person name="Yasunaga T."/>
            <person name="Kuhara S."/>
            <person name="Shiba T."/>
            <person name="Hattori M."/>
            <person name="Shinagawa H."/>
        </authorList>
    </citation>
    <scope>NUCLEOTIDE SEQUENCE [LARGE SCALE GENOMIC DNA]</scope>
    <source>
        <strain>O157:H7 / Sakai / RIMD 0509952 / EHEC</strain>
    </source>
</reference>